<organism>
    <name type="scientific">Burkholderia orbicola (strain MC0-3)</name>
    <dbReference type="NCBI Taxonomy" id="406425"/>
    <lineage>
        <taxon>Bacteria</taxon>
        <taxon>Pseudomonadati</taxon>
        <taxon>Pseudomonadota</taxon>
        <taxon>Betaproteobacteria</taxon>
        <taxon>Burkholderiales</taxon>
        <taxon>Burkholderiaceae</taxon>
        <taxon>Burkholderia</taxon>
        <taxon>Burkholderia cepacia complex</taxon>
        <taxon>Burkholderia orbicola</taxon>
    </lineage>
</organism>
<protein>
    <recommendedName>
        <fullName evidence="1">Phosphatidylglycerol--prolipoprotein diacylglyceryl transferase</fullName>
        <ecNumber evidence="1">2.5.1.145</ecNumber>
    </recommendedName>
</protein>
<dbReference type="EC" id="2.5.1.145" evidence="1"/>
<dbReference type="EMBL" id="CP000958">
    <property type="protein sequence ID" value="ACA91626.1"/>
    <property type="molecule type" value="Genomic_DNA"/>
</dbReference>
<dbReference type="RefSeq" id="WP_012329025.1">
    <property type="nucleotide sequence ID" value="NC_010508.1"/>
</dbReference>
<dbReference type="SMR" id="B1JWU6"/>
<dbReference type="GeneID" id="83049255"/>
<dbReference type="KEGG" id="bcm:Bcenmc03_2465"/>
<dbReference type="HOGENOM" id="CLU_013386_1_0_4"/>
<dbReference type="UniPathway" id="UPA00664"/>
<dbReference type="Proteomes" id="UP000002169">
    <property type="component" value="Chromosome 1"/>
</dbReference>
<dbReference type="GO" id="GO:0005886">
    <property type="term" value="C:plasma membrane"/>
    <property type="evidence" value="ECO:0007669"/>
    <property type="project" value="UniProtKB-SubCell"/>
</dbReference>
<dbReference type="GO" id="GO:0008961">
    <property type="term" value="F:phosphatidylglycerol-prolipoprotein diacylglyceryl transferase activity"/>
    <property type="evidence" value="ECO:0007669"/>
    <property type="project" value="UniProtKB-UniRule"/>
</dbReference>
<dbReference type="GO" id="GO:0042158">
    <property type="term" value="P:lipoprotein biosynthetic process"/>
    <property type="evidence" value="ECO:0007669"/>
    <property type="project" value="UniProtKB-UniRule"/>
</dbReference>
<dbReference type="HAMAP" id="MF_01147">
    <property type="entry name" value="Lgt"/>
    <property type="match status" value="1"/>
</dbReference>
<dbReference type="InterPro" id="IPR001640">
    <property type="entry name" value="Lgt"/>
</dbReference>
<dbReference type="NCBIfam" id="TIGR00544">
    <property type="entry name" value="lgt"/>
    <property type="match status" value="1"/>
</dbReference>
<dbReference type="PANTHER" id="PTHR30589:SF0">
    <property type="entry name" value="PHOSPHATIDYLGLYCEROL--PROLIPOPROTEIN DIACYLGLYCERYL TRANSFERASE"/>
    <property type="match status" value="1"/>
</dbReference>
<dbReference type="PANTHER" id="PTHR30589">
    <property type="entry name" value="PROLIPOPROTEIN DIACYLGLYCERYL TRANSFERASE"/>
    <property type="match status" value="1"/>
</dbReference>
<dbReference type="Pfam" id="PF01790">
    <property type="entry name" value="LGT"/>
    <property type="match status" value="1"/>
</dbReference>
<dbReference type="PROSITE" id="PS01311">
    <property type="entry name" value="LGT"/>
    <property type="match status" value="1"/>
</dbReference>
<proteinExistence type="inferred from homology"/>
<gene>
    <name evidence="1" type="primary">lgt</name>
    <name type="ordered locus">Bcenmc03_2465</name>
</gene>
<name>LGT_BURO0</name>
<keyword id="KW-0997">Cell inner membrane</keyword>
<keyword id="KW-1003">Cell membrane</keyword>
<keyword id="KW-0472">Membrane</keyword>
<keyword id="KW-0808">Transferase</keyword>
<keyword id="KW-0812">Transmembrane</keyword>
<keyword id="KW-1133">Transmembrane helix</keyword>
<comment type="function">
    <text evidence="1">Catalyzes the transfer of the diacylglyceryl group from phosphatidylglycerol to the sulfhydryl group of the N-terminal cysteine of a prolipoprotein, the first step in the formation of mature lipoproteins.</text>
</comment>
<comment type="catalytic activity">
    <reaction evidence="1">
        <text>L-cysteinyl-[prolipoprotein] + a 1,2-diacyl-sn-glycero-3-phospho-(1'-sn-glycerol) = an S-1,2-diacyl-sn-glyceryl-L-cysteinyl-[prolipoprotein] + sn-glycerol 1-phosphate + H(+)</text>
        <dbReference type="Rhea" id="RHEA:56712"/>
        <dbReference type="Rhea" id="RHEA-COMP:14679"/>
        <dbReference type="Rhea" id="RHEA-COMP:14680"/>
        <dbReference type="ChEBI" id="CHEBI:15378"/>
        <dbReference type="ChEBI" id="CHEBI:29950"/>
        <dbReference type="ChEBI" id="CHEBI:57685"/>
        <dbReference type="ChEBI" id="CHEBI:64716"/>
        <dbReference type="ChEBI" id="CHEBI:140658"/>
        <dbReference type="EC" id="2.5.1.145"/>
    </reaction>
</comment>
<comment type="pathway">
    <text evidence="1">Protein modification; lipoprotein biosynthesis (diacylglyceryl transfer).</text>
</comment>
<comment type="subcellular location">
    <subcellularLocation>
        <location evidence="1">Cell inner membrane</location>
        <topology evidence="1">Multi-pass membrane protein</topology>
    </subcellularLocation>
</comment>
<comment type="similarity">
    <text evidence="1">Belongs to the Lgt family.</text>
</comment>
<reference key="1">
    <citation type="submission" date="2008-02" db="EMBL/GenBank/DDBJ databases">
        <title>Complete sequence of chromosome 1 of Burkholderia cenocepacia MC0-3.</title>
        <authorList>
            <person name="Copeland A."/>
            <person name="Lucas S."/>
            <person name="Lapidus A."/>
            <person name="Barry K."/>
            <person name="Bruce D."/>
            <person name="Goodwin L."/>
            <person name="Glavina del Rio T."/>
            <person name="Dalin E."/>
            <person name="Tice H."/>
            <person name="Pitluck S."/>
            <person name="Chain P."/>
            <person name="Malfatti S."/>
            <person name="Shin M."/>
            <person name="Vergez L."/>
            <person name="Schmutz J."/>
            <person name="Larimer F."/>
            <person name="Land M."/>
            <person name="Hauser L."/>
            <person name="Kyrpides N."/>
            <person name="Mikhailova N."/>
            <person name="Tiedje J."/>
            <person name="Richardson P."/>
        </authorList>
    </citation>
    <scope>NUCLEOTIDE SEQUENCE [LARGE SCALE GENOMIC DNA]</scope>
    <source>
        <strain>MC0-3</strain>
    </source>
</reference>
<accession>B1JWU6</accession>
<feature type="chain" id="PRO_1000137408" description="Phosphatidylglycerol--prolipoprotein diacylglyceryl transferase">
    <location>
        <begin position="1"/>
        <end position="298"/>
    </location>
</feature>
<feature type="transmembrane region" description="Helical" evidence="1">
    <location>
        <begin position="17"/>
        <end position="37"/>
    </location>
</feature>
<feature type="transmembrane region" description="Helical" evidence="1">
    <location>
        <begin position="59"/>
        <end position="79"/>
    </location>
</feature>
<feature type="transmembrane region" description="Helical" evidence="1">
    <location>
        <begin position="97"/>
        <end position="117"/>
    </location>
</feature>
<feature type="transmembrane region" description="Helical" evidence="1">
    <location>
        <begin position="129"/>
        <end position="149"/>
    </location>
</feature>
<feature type="transmembrane region" description="Helical" evidence="1">
    <location>
        <begin position="204"/>
        <end position="224"/>
    </location>
</feature>
<feature type="transmembrane region" description="Helical" evidence="1">
    <location>
        <begin position="230"/>
        <end position="250"/>
    </location>
</feature>
<feature type="transmembrane region" description="Helical" evidence="1">
    <location>
        <begin position="257"/>
        <end position="277"/>
    </location>
</feature>
<feature type="binding site" evidence="1">
    <location>
        <position position="142"/>
    </location>
    <ligand>
        <name>a 1,2-diacyl-sn-glycero-3-phospho-(1'-sn-glycerol)</name>
        <dbReference type="ChEBI" id="CHEBI:64716"/>
    </ligand>
</feature>
<sequence length="298" mass="33502">MIIHPNFDPVAIHLGPLAVRWYGLMYLVGFIAAIVVGRIRLKLPYVAAQGWTAKDIDDMMFYGVLGTVLGGRLGYVLFYKADFYFSHPLDVFKVWEGGMSFHGGFLGVTLAMMLFAWQRKRHWLQVTDFVAPMVPLGLAAGRLGNFINGELWGRVTDPTAPWAMLFPGAMRDDAAWLPKHPELVEKWHLADVFMQYQMLPRHPSQLYEIALEGIALFFVLFLFARKPRPMGAISALFLIGYGLARFTVEFAREPDDFLGLLALGLSMGQWLSLPMILAGIAMMIWAYRRRAANANAAA</sequence>
<evidence type="ECO:0000255" key="1">
    <source>
        <dbReference type="HAMAP-Rule" id="MF_01147"/>
    </source>
</evidence>